<reference evidence="7" key="1">
    <citation type="journal article" date="2012" name="J. Biol. Chem.">
        <title>Novel Cyclotides and Uncyclotides with Highly Shortened Precursors from Chassalia chartacea and Effects of Methionine Oxidation on Bioactivities.</title>
        <authorList>
            <person name="Nguyen G.K."/>
            <person name="Lim W.H."/>
            <person name="Nguyen P.Q."/>
            <person name="Tam J.P."/>
        </authorList>
    </citation>
    <scope>NUCLEOTIDE SEQUENCE [MRNA]</scope>
    <scope>PROTEIN SEQUENCE OF 36-64</scope>
    <scope>FUNCTION</scope>
    <scope>TISSUE SPECIFICITY</scope>
    <scope>MASS SPECTROMETRY</scope>
    <scope>IDENTIFICATION BY MASS SPECTROMETRY</scope>
</reference>
<sequence length="64" mass="6926">VLVASLVMLEAQSSDTIQVPDWGKRLLMNHDSNRVGIPCGESCVWIPCLTAIAGCSCKNKVCYT</sequence>
<feature type="propeptide" id="PRO_0000440229" description="Removed in mature form" evidence="6">
    <location>
        <begin position="1" status="less than"/>
        <end position="35"/>
    </location>
</feature>
<feature type="peptide" id="PRO_0000440230" description="Chassatide C7" evidence="2 3">
    <location>
        <begin position="36"/>
        <end position="64"/>
    </location>
</feature>
<feature type="disulfide bond" evidence="2">
    <location>
        <begin position="39"/>
        <end position="55"/>
    </location>
</feature>
<feature type="disulfide bond" evidence="2">
    <location>
        <begin position="43"/>
        <end position="57"/>
    </location>
</feature>
<feature type="disulfide bond" evidence="2">
    <location>
        <begin position="48"/>
        <end position="62"/>
    </location>
</feature>
<feature type="non-terminal residue" evidence="7">
    <location>
        <position position="1"/>
    </location>
</feature>
<evidence type="ECO:0000255" key="1"/>
<evidence type="ECO:0000255" key="2">
    <source>
        <dbReference type="PROSITE-ProRule" id="PRU00395"/>
    </source>
</evidence>
<evidence type="ECO:0000269" key="3">
    <source>
    </source>
</evidence>
<evidence type="ECO:0000303" key="4">
    <source>
    </source>
</evidence>
<evidence type="ECO:0000305" key="5"/>
<evidence type="ECO:0000305" key="6">
    <source>
    </source>
</evidence>
<evidence type="ECO:0000312" key="7">
    <source>
        <dbReference type="EMBL" id="AFH57354.1"/>
    </source>
</evidence>
<keyword id="KW-0044">Antibiotic</keyword>
<keyword id="KW-0929">Antimicrobial</keyword>
<keyword id="KW-0204">Cytolysis</keyword>
<keyword id="KW-0903">Direct protein sequencing</keyword>
<keyword id="KW-1015">Disulfide bond</keyword>
<keyword id="KW-0354">Hemolysis</keyword>
<keyword id="KW-0960">Knottin</keyword>
<keyword id="KW-0611">Plant defense</keyword>
<proteinExistence type="evidence at protein level"/>
<organism>
    <name type="scientific">Chassalia chartacea</name>
    <name type="common">Chassalia curviflora</name>
    <dbReference type="NCBI Taxonomy" id="510798"/>
    <lineage>
        <taxon>Eukaryota</taxon>
        <taxon>Viridiplantae</taxon>
        <taxon>Streptophyta</taxon>
        <taxon>Embryophyta</taxon>
        <taxon>Tracheophyta</taxon>
        <taxon>Spermatophyta</taxon>
        <taxon>Magnoliopsida</taxon>
        <taxon>eudicotyledons</taxon>
        <taxon>Gunneridae</taxon>
        <taxon>Pentapetalae</taxon>
        <taxon>asterids</taxon>
        <taxon>lamiids</taxon>
        <taxon>Gentianales</taxon>
        <taxon>Rubiaceae</taxon>
        <taxon>Rubioideae</taxon>
        <taxon>Palicoureeae</taxon>
        <taxon>Chassalia</taxon>
    </lineage>
</organism>
<name>CYC7_CHACT</name>
<comment type="function">
    <text evidence="1 2 3">Probably participates in a plant defense mechanism (Probable). Active against E.coli ATTC25922 but not against S.aureus ATCC 12600 or S.epidermidis ATCC 14990 (PubMed:22467870). Has cytotoxic and hemolytic activity (PubMed:22467870).</text>
</comment>
<comment type="tissue specificity">
    <text evidence="3">Expressed in fruit, pedicel, root and stem but not in leaf (at protein level).</text>
</comment>
<comment type="domain">
    <text evidence="5">The presence of a 'disulfide through disulfide knot' structurally defines this protein as a knottin.</text>
</comment>
<comment type="mass spectrometry" mass="2955.0" method="MALDI" evidence="3"/>
<comment type="similarity">
    <text evidence="2">Belongs to the cyclotide family. Bracelet subfamily.</text>
</comment>
<comment type="caution">
    <text evidence="3">The mature peptide is linear as it lacks the C-terminal Asp/Asn residue required for cyclization.</text>
</comment>
<dbReference type="EMBL" id="JQ309964">
    <property type="protein sequence ID" value="AFH57354.1"/>
    <property type="molecule type" value="mRNA"/>
</dbReference>
<dbReference type="SMR" id="I0B6F4"/>
<dbReference type="GO" id="GO:0050829">
    <property type="term" value="P:defense response to Gram-negative bacterium"/>
    <property type="evidence" value="ECO:0000314"/>
    <property type="project" value="UniProtKB"/>
</dbReference>
<dbReference type="GO" id="GO:0031640">
    <property type="term" value="P:killing of cells of another organism"/>
    <property type="evidence" value="ECO:0007669"/>
    <property type="project" value="UniProtKB-KW"/>
</dbReference>
<dbReference type="InterPro" id="IPR005535">
    <property type="entry name" value="Cyclotide"/>
</dbReference>
<dbReference type="InterPro" id="IPR012323">
    <property type="entry name" value="Cyclotide_bracelet_CS"/>
</dbReference>
<dbReference type="InterPro" id="IPR036146">
    <property type="entry name" value="Cyclotide_sf"/>
</dbReference>
<dbReference type="Pfam" id="PF03784">
    <property type="entry name" value="Cyclotide"/>
    <property type="match status" value="1"/>
</dbReference>
<dbReference type="SUPFAM" id="SSF57038">
    <property type="entry name" value="Cyclotides"/>
    <property type="match status" value="1"/>
</dbReference>
<dbReference type="PROSITE" id="PS51052">
    <property type="entry name" value="CYCLOTIDE"/>
    <property type="match status" value="1"/>
</dbReference>
<dbReference type="PROSITE" id="PS60008">
    <property type="entry name" value="CYCLOTIDE_BRACELET"/>
    <property type="match status" value="1"/>
</dbReference>
<accession>I0B6F4</accession>
<protein>
    <recommendedName>
        <fullName evidence="7">Chassatide C7</fullName>
    </recommendedName>
    <alternativeName>
        <fullName evidence="4">Cyclotide chaC7</fullName>
    </alternativeName>
</protein>